<gene>
    <name evidence="2" type="primary">tuf1</name>
    <name type="synonym">tufA</name>
    <name type="ordered locus">ERGA_CDS_01580</name>
</gene>
<gene>
    <name evidence="2" type="primary">tuf2</name>
    <name type="synonym">tuf</name>
    <name type="ordered locus">ERGA_CDS_06310</name>
</gene>
<organism>
    <name type="scientific">Ehrlichia ruminantium (strain Gardel)</name>
    <dbReference type="NCBI Taxonomy" id="302409"/>
    <lineage>
        <taxon>Bacteria</taxon>
        <taxon>Pseudomonadati</taxon>
        <taxon>Pseudomonadota</taxon>
        <taxon>Alphaproteobacteria</taxon>
        <taxon>Rickettsiales</taxon>
        <taxon>Anaplasmataceae</taxon>
        <taxon>Ehrlichia</taxon>
    </lineage>
</organism>
<protein>
    <recommendedName>
        <fullName evidence="2">Elongation factor Tu</fullName>
        <shortName evidence="2">EF-Tu</shortName>
        <ecNumber evidence="2">3.6.5.3</ecNumber>
    </recommendedName>
</protein>
<sequence length="395" mass="43282">MVDGRKPHINVGTIGHVDHGKTTLTAALTTVLAKRLSGEGNKSVKYDEIDKAPEEKARGITISTAHVEYETENRHYAHVDCPGHADYIKNMITGAAQMDAAILVVSATDGAMPQTREHILLAKQVGVKDIVVWMNKCDVVDDEEMLSLVEMEIRELLTKYGYPGDDIDVVKGSAVKALEEESADGVWSEKIMELMNALEKIDLPIREKDKPFLMSIEDVFSIPGRGTVVTGRIERGVIKVGDKIDIVGLRDIQSTVCTGVEMFHKALDAGEAGDNAGILLRGIKKEDVERGQVLSAPGQIHSYKGFKAEVYVLKKEEGGRHTPFFSNYQPQFYVRTTDVTGNIKLPDGVEMVMPGDNISIEVNLDKPVAIDKGLRFAIREGGRTIGSGIITEILE</sequence>
<accession>Q5FFE6</accession>
<accession>Q5FFT8</accession>
<reference key="1">
    <citation type="journal article" date="2006" name="J. Bacteriol.">
        <title>Comparative genomic analysis of three strains of Ehrlichia ruminantium reveals an active process of genome size plasticity.</title>
        <authorList>
            <person name="Frutos R."/>
            <person name="Viari A."/>
            <person name="Ferraz C."/>
            <person name="Morgat A."/>
            <person name="Eychenie S."/>
            <person name="Kandassamy Y."/>
            <person name="Chantal I."/>
            <person name="Bensaid A."/>
            <person name="Coissac E."/>
            <person name="Vachiery N."/>
            <person name="Demaille J."/>
            <person name="Martinez D."/>
        </authorList>
    </citation>
    <scope>NUCLEOTIDE SEQUENCE [LARGE SCALE GENOMIC DNA]</scope>
    <source>
        <strain>Gardel</strain>
    </source>
</reference>
<comment type="function">
    <text evidence="2">GTP hydrolase that promotes the GTP-dependent binding of aminoacyl-tRNA to the A-site of ribosomes during protein biosynthesis.</text>
</comment>
<comment type="catalytic activity">
    <reaction evidence="2">
        <text>GTP + H2O = GDP + phosphate + H(+)</text>
        <dbReference type="Rhea" id="RHEA:19669"/>
        <dbReference type="ChEBI" id="CHEBI:15377"/>
        <dbReference type="ChEBI" id="CHEBI:15378"/>
        <dbReference type="ChEBI" id="CHEBI:37565"/>
        <dbReference type="ChEBI" id="CHEBI:43474"/>
        <dbReference type="ChEBI" id="CHEBI:58189"/>
        <dbReference type="EC" id="3.6.5.3"/>
    </reaction>
    <physiologicalReaction direction="left-to-right" evidence="2">
        <dbReference type="Rhea" id="RHEA:19670"/>
    </physiologicalReaction>
</comment>
<comment type="subunit">
    <text evidence="2">Monomer.</text>
</comment>
<comment type="subcellular location">
    <subcellularLocation>
        <location evidence="2">Cytoplasm</location>
    </subcellularLocation>
</comment>
<comment type="similarity">
    <text evidence="2">Belongs to the TRAFAC class translation factor GTPase superfamily. Classic translation factor GTPase family. EF-Tu/EF-1A subfamily.</text>
</comment>
<comment type="sequence caution" evidence="3">
    <conflict type="erroneous initiation">
        <sequence resource="EMBL-CDS" id="CAI28083"/>
    </conflict>
</comment>
<feature type="chain" id="PRO_0000337376" description="Elongation factor Tu">
    <location>
        <begin position="1"/>
        <end position="395"/>
    </location>
</feature>
<feature type="domain" description="tr-type G">
    <location>
        <begin position="6"/>
        <end position="205"/>
    </location>
</feature>
<feature type="region of interest" description="G1" evidence="1">
    <location>
        <begin position="15"/>
        <end position="22"/>
    </location>
</feature>
<feature type="region of interest" description="G2" evidence="1">
    <location>
        <begin position="59"/>
        <end position="63"/>
    </location>
</feature>
<feature type="region of interest" description="G3" evidence="1">
    <location>
        <begin position="80"/>
        <end position="83"/>
    </location>
</feature>
<feature type="region of interest" description="G4" evidence="1">
    <location>
        <begin position="135"/>
        <end position="138"/>
    </location>
</feature>
<feature type="region of interest" description="G5" evidence="1">
    <location>
        <begin position="173"/>
        <end position="175"/>
    </location>
</feature>
<feature type="binding site" evidence="2">
    <location>
        <begin position="15"/>
        <end position="22"/>
    </location>
    <ligand>
        <name>GTP</name>
        <dbReference type="ChEBI" id="CHEBI:37565"/>
    </ligand>
</feature>
<feature type="binding site" evidence="2">
    <location>
        <position position="22"/>
    </location>
    <ligand>
        <name>Mg(2+)</name>
        <dbReference type="ChEBI" id="CHEBI:18420"/>
    </ligand>
</feature>
<feature type="binding site" evidence="2">
    <location>
        <begin position="80"/>
        <end position="84"/>
    </location>
    <ligand>
        <name>GTP</name>
        <dbReference type="ChEBI" id="CHEBI:37565"/>
    </ligand>
</feature>
<feature type="binding site" evidence="2">
    <location>
        <begin position="135"/>
        <end position="138"/>
    </location>
    <ligand>
        <name>GTP</name>
        <dbReference type="ChEBI" id="CHEBI:37565"/>
    </ligand>
</feature>
<name>EFTU_EHRRG</name>
<dbReference type="EC" id="3.6.5.3" evidence="2"/>
<dbReference type="EMBL" id="CR925677">
    <property type="protein sequence ID" value="CAI27610.1"/>
    <property type="molecule type" value="Genomic_DNA"/>
</dbReference>
<dbReference type="EMBL" id="CR925677">
    <property type="protein sequence ID" value="CAI28083.1"/>
    <property type="status" value="ALT_INIT"/>
    <property type="molecule type" value="Genomic_DNA"/>
</dbReference>
<dbReference type="RefSeq" id="WP_011154850.1">
    <property type="nucleotide sequence ID" value="NC_006831.1"/>
</dbReference>
<dbReference type="SMR" id="Q5FFE6"/>
<dbReference type="GeneID" id="33058428"/>
<dbReference type="KEGG" id="erg:ERGA_CDS_01580"/>
<dbReference type="KEGG" id="erg:ERGA_CDS_06310"/>
<dbReference type="HOGENOM" id="CLU_007265_0_1_5"/>
<dbReference type="OrthoDB" id="9803139at2"/>
<dbReference type="Proteomes" id="UP000000533">
    <property type="component" value="Chromosome"/>
</dbReference>
<dbReference type="GO" id="GO:0005829">
    <property type="term" value="C:cytosol"/>
    <property type="evidence" value="ECO:0007669"/>
    <property type="project" value="TreeGrafter"/>
</dbReference>
<dbReference type="GO" id="GO:0005525">
    <property type="term" value="F:GTP binding"/>
    <property type="evidence" value="ECO:0007669"/>
    <property type="project" value="UniProtKB-UniRule"/>
</dbReference>
<dbReference type="GO" id="GO:0003924">
    <property type="term" value="F:GTPase activity"/>
    <property type="evidence" value="ECO:0007669"/>
    <property type="project" value="InterPro"/>
</dbReference>
<dbReference type="GO" id="GO:0097216">
    <property type="term" value="F:guanosine tetraphosphate binding"/>
    <property type="evidence" value="ECO:0007669"/>
    <property type="project" value="UniProtKB-ARBA"/>
</dbReference>
<dbReference type="GO" id="GO:0003746">
    <property type="term" value="F:translation elongation factor activity"/>
    <property type="evidence" value="ECO:0007669"/>
    <property type="project" value="UniProtKB-UniRule"/>
</dbReference>
<dbReference type="CDD" id="cd01884">
    <property type="entry name" value="EF_Tu"/>
    <property type="match status" value="1"/>
</dbReference>
<dbReference type="CDD" id="cd03697">
    <property type="entry name" value="EFTU_II"/>
    <property type="match status" value="1"/>
</dbReference>
<dbReference type="CDD" id="cd03707">
    <property type="entry name" value="EFTU_III"/>
    <property type="match status" value="1"/>
</dbReference>
<dbReference type="FunFam" id="2.40.30.10:FF:000001">
    <property type="entry name" value="Elongation factor Tu"/>
    <property type="match status" value="1"/>
</dbReference>
<dbReference type="FunFam" id="3.40.50.300:FF:000003">
    <property type="entry name" value="Elongation factor Tu"/>
    <property type="match status" value="1"/>
</dbReference>
<dbReference type="Gene3D" id="3.40.50.300">
    <property type="entry name" value="P-loop containing nucleotide triphosphate hydrolases"/>
    <property type="match status" value="1"/>
</dbReference>
<dbReference type="Gene3D" id="2.40.30.10">
    <property type="entry name" value="Translation factors"/>
    <property type="match status" value="2"/>
</dbReference>
<dbReference type="HAMAP" id="MF_00118_B">
    <property type="entry name" value="EF_Tu_B"/>
    <property type="match status" value="1"/>
</dbReference>
<dbReference type="InterPro" id="IPR041709">
    <property type="entry name" value="EF-Tu_GTP-bd"/>
</dbReference>
<dbReference type="InterPro" id="IPR050055">
    <property type="entry name" value="EF-Tu_GTPase"/>
</dbReference>
<dbReference type="InterPro" id="IPR004161">
    <property type="entry name" value="EFTu-like_2"/>
</dbReference>
<dbReference type="InterPro" id="IPR033720">
    <property type="entry name" value="EFTU_2"/>
</dbReference>
<dbReference type="InterPro" id="IPR031157">
    <property type="entry name" value="G_TR_CS"/>
</dbReference>
<dbReference type="InterPro" id="IPR027417">
    <property type="entry name" value="P-loop_NTPase"/>
</dbReference>
<dbReference type="InterPro" id="IPR005225">
    <property type="entry name" value="Small_GTP-bd"/>
</dbReference>
<dbReference type="InterPro" id="IPR000795">
    <property type="entry name" value="T_Tr_GTP-bd_dom"/>
</dbReference>
<dbReference type="InterPro" id="IPR009000">
    <property type="entry name" value="Transl_B-barrel_sf"/>
</dbReference>
<dbReference type="InterPro" id="IPR009001">
    <property type="entry name" value="Transl_elong_EF1A/Init_IF2_C"/>
</dbReference>
<dbReference type="InterPro" id="IPR004541">
    <property type="entry name" value="Transl_elong_EFTu/EF1A_bac/org"/>
</dbReference>
<dbReference type="InterPro" id="IPR004160">
    <property type="entry name" value="Transl_elong_EFTu/EF1A_C"/>
</dbReference>
<dbReference type="NCBIfam" id="TIGR00485">
    <property type="entry name" value="EF-Tu"/>
    <property type="match status" value="1"/>
</dbReference>
<dbReference type="NCBIfam" id="NF000766">
    <property type="entry name" value="PRK00049.1"/>
    <property type="match status" value="1"/>
</dbReference>
<dbReference type="NCBIfam" id="NF009372">
    <property type="entry name" value="PRK12735.1"/>
    <property type="match status" value="1"/>
</dbReference>
<dbReference type="NCBIfam" id="NF009373">
    <property type="entry name" value="PRK12736.1"/>
    <property type="match status" value="1"/>
</dbReference>
<dbReference type="NCBIfam" id="TIGR00231">
    <property type="entry name" value="small_GTP"/>
    <property type="match status" value="1"/>
</dbReference>
<dbReference type="PANTHER" id="PTHR43721:SF22">
    <property type="entry name" value="ELONGATION FACTOR TU, MITOCHONDRIAL"/>
    <property type="match status" value="1"/>
</dbReference>
<dbReference type="PANTHER" id="PTHR43721">
    <property type="entry name" value="ELONGATION FACTOR TU-RELATED"/>
    <property type="match status" value="1"/>
</dbReference>
<dbReference type="Pfam" id="PF00009">
    <property type="entry name" value="GTP_EFTU"/>
    <property type="match status" value="1"/>
</dbReference>
<dbReference type="Pfam" id="PF03144">
    <property type="entry name" value="GTP_EFTU_D2"/>
    <property type="match status" value="1"/>
</dbReference>
<dbReference type="Pfam" id="PF03143">
    <property type="entry name" value="GTP_EFTU_D3"/>
    <property type="match status" value="1"/>
</dbReference>
<dbReference type="PRINTS" id="PR00315">
    <property type="entry name" value="ELONGATNFCT"/>
</dbReference>
<dbReference type="SUPFAM" id="SSF50465">
    <property type="entry name" value="EF-Tu/eEF-1alpha/eIF2-gamma C-terminal domain"/>
    <property type="match status" value="1"/>
</dbReference>
<dbReference type="SUPFAM" id="SSF52540">
    <property type="entry name" value="P-loop containing nucleoside triphosphate hydrolases"/>
    <property type="match status" value="1"/>
</dbReference>
<dbReference type="SUPFAM" id="SSF50447">
    <property type="entry name" value="Translation proteins"/>
    <property type="match status" value="1"/>
</dbReference>
<dbReference type="PROSITE" id="PS00301">
    <property type="entry name" value="G_TR_1"/>
    <property type="match status" value="1"/>
</dbReference>
<dbReference type="PROSITE" id="PS51722">
    <property type="entry name" value="G_TR_2"/>
    <property type="match status" value="1"/>
</dbReference>
<proteinExistence type="inferred from homology"/>
<keyword id="KW-0963">Cytoplasm</keyword>
<keyword id="KW-0251">Elongation factor</keyword>
<keyword id="KW-0342">GTP-binding</keyword>
<keyword id="KW-0378">Hydrolase</keyword>
<keyword id="KW-0460">Magnesium</keyword>
<keyword id="KW-0479">Metal-binding</keyword>
<keyword id="KW-0547">Nucleotide-binding</keyword>
<keyword id="KW-0648">Protein biosynthesis</keyword>
<evidence type="ECO:0000250" key="1"/>
<evidence type="ECO:0000255" key="2">
    <source>
        <dbReference type="HAMAP-Rule" id="MF_00118"/>
    </source>
</evidence>
<evidence type="ECO:0000305" key="3"/>